<gene>
    <name evidence="1" type="primary">aroK</name>
    <name type="ordered locus">Mthe_1354</name>
</gene>
<keyword id="KW-0028">Amino-acid biosynthesis</keyword>
<keyword id="KW-0057">Aromatic amino acid biosynthesis</keyword>
<keyword id="KW-0067">ATP-binding</keyword>
<keyword id="KW-0963">Cytoplasm</keyword>
<keyword id="KW-0418">Kinase</keyword>
<keyword id="KW-0547">Nucleotide-binding</keyword>
<keyword id="KW-1185">Reference proteome</keyword>
<keyword id="KW-0808">Transferase</keyword>
<accession>A0B8V5</accession>
<name>AROK_METTP</name>
<sequence>MRGYATAYGAATVLNAIANWKGSAFGISLRTSAEVVLDDSEGVRGDVEGIDTTLIVRCVESVLSHFDLDYGGVVRTRSEIPVASGLKSSSAAANAAVLATVDALGEEIDMIDAVRIGVEAALDAGVTVTGAFDDACASMLGGVVVTDNLKRCLLKRDELHSDVVLLIPEEQFFSRDVDVERCRALSRVADAVFEMAIEGDYAGAMTLNGLLYCTALRRSPEPIVLALRAGAAGATLSGTGPAYAALVDDISGDDVVEAWSSLGGRIIRAAVENRSARMGQADLFQEGI</sequence>
<protein>
    <recommendedName>
        <fullName evidence="1">Shikimate kinase</fullName>
        <shortName evidence="1">SK</shortName>
        <ecNumber evidence="1">2.7.1.71</ecNumber>
    </recommendedName>
</protein>
<comment type="catalytic activity">
    <reaction evidence="1">
        <text>shikimate + ATP = 3-phosphoshikimate + ADP + H(+)</text>
        <dbReference type="Rhea" id="RHEA:13121"/>
        <dbReference type="ChEBI" id="CHEBI:15378"/>
        <dbReference type="ChEBI" id="CHEBI:30616"/>
        <dbReference type="ChEBI" id="CHEBI:36208"/>
        <dbReference type="ChEBI" id="CHEBI:145989"/>
        <dbReference type="ChEBI" id="CHEBI:456216"/>
        <dbReference type="EC" id="2.7.1.71"/>
    </reaction>
</comment>
<comment type="pathway">
    <text evidence="1">Metabolic intermediate biosynthesis; chorismate biosynthesis; chorismate from D-erythrose 4-phosphate and phosphoenolpyruvate: step 5/7.</text>
</comment>
<comment type="subcellular location">
    <subcellularLocation>
        <location evidence="1">Cytoplasm</location>
    </subcellularLocation>
</comment>
<comment type="similarity">
    <text evidence="1">Belongs to the GHMP kinase family. Archaeal shikimate kinase subfamily.</text>
</comment>
<organism>
    <name type="scientific">Methanothrix thermoacetophila (strain DSM 6194 / JCM 14653 / NBRC 101360 / PT)</name>
    <name type="common">Methanosaeta thermophila</name>
    <dbReference type="NCBI Taxonomy" id="349307"/>
    <lineage>
        <taxon>Archaea</taxon>
        <taxon>Methanobacteriati</taxon>
        <taxon>Methanobacteriota</taxon>
        <taxon>Stenosarchaea group</taxon>
        <taxon>Methanomicrobia</taxon>
        <taxon>Methanotrichales</taxon>
        <taxon>Methanotrichaceae</taxon>
        <taxon>Methanothrix</taxon>
    </lineage>
</organism>
<feature type="chain" id="PRO_1000059938" description="Shikimate kinase">
    <location>
        <begin position="1"/>
        <end position="288"/>
    </location>
</feature>
<feature type="binding site" evidence="1">
    <location>
        <begin position="81"/>
        <end position="91"/>
    </location>
    <ligand>
        <name>ATP</name>
        <dbReference type="ChEBI" id="CHEBI:30616"/>
    </ligand>
</feature>
<proteinExistence type="inferred from homology"/>
<reference key="1">
    <citation type="submission" date="2006-10" db="EMBL/GenBank/DDBJ databases">
        <title>Complete sequence of Methanosaeta thermophila PT.</title>
        <authorList>
            <consortium name="US DOE Joint Genome Institute"/>
            <person name="Copeland A."/>
            <person name="Lucas S."/>
            <person name="Lapidus A."/>
            <person name="Barry K."/>
            <person name="Detter J.C."/>
            <person name="Glavina del Rio T."/>
            <person name="Hammon N."/>
            <person name="Israni S."/>
            <person name="Pitluck S."/>
            <person name="Chain P."/>
            <person name="Malfatti S."/>
            <person name="Shin M."/>
            <person name="Vergez L."/>
            <person name="Schmutz J."/>
            <person name="Larimer F."/>
            <person name="Land M."/>
            <person name="Hauser L."/>
            <person name="Kyrpides N."/>
            <person name="Kim E."/>
            <person name="Smith K.S."/>
            <person name="Ingram-Smith C."/>
            <person name="Richardson P."/>
        </authorList>
    </citation>
    <scope>NUCLEOTIDE SEQUENCE [LARGE SCALE GENOMIC DNA]</scope>
    <source>
        <strain>DSM 6194 / JCM 14653 / NBRC 101360 / PT</strain>
    </source>
</reference>
<evidence type="ECO:0000255" key="1">
    <source>
        <dbReference type="HAMAP-Rule" id="MF_00370"/>
    </source>
</evidence>
<dbReference type="EC" id="2.7.1.71" evidence="1"/>
<dbReference type="EMBL" id="CP000477">
    <property type="protein sequence ID" value="ABK15129.1"/>
    <property type="molecule type" value="Genomic_DNA"/>
</dbReference>
<dbReference type="SMR" id="A0B8V5"/>
<dbReference type="STRING" id="349307.Mthe_1354"/>
<dbReference type="KEGG" id="mtp:Mthe_1354"/>
<dbReference type="HOGENOM" id="CLU_073768_0_0_2"/>
<dbReference type="UniPathway" id="UPA00053">
    <property type="reaction ID" value="UER00088"/>
</dbReference>
<dbReference type="Proteomes" id="UP000000674">
    <property type="component" value="Chromosome"/>
</dbReference>
<dbReference type="GO" id="GO:0005737">
    <property type="term" value="C:cytoplasm"/>
    <property type="evidence" value="ECO:0007669"/>
    <property type="project" value="UniProtKB-SubCell"/>
</dbReference>
<dbReference type="GO" id="GO:0005524">
    <property type="term" value="F:ATP binding"/>
    <property type="evidence" value="ECO:0007669"/>
    <property type="project" value="UniProtKB-UniRule"/>
</dbReference>
<dbReference type="GO" id="GO:0004765">
    <property type="term" value="F:shikimate kinase activity"/>
    <property type="evidence" value="ECO:0007669"/>
    <property type="project" value="UniProtKB-UniRule"/>
</dbReference>
<dbReference type="GO" id="GO:0008652">
    <property type="term" value="P:amino acid biosynthetic process"/>
    <property type="evidence" value="ECO:0007669"/>
    <property type="project" value="UniProtKB-KW"/>
</dbReference>
<dbReference type="GO" id="GO:0009073">
    <property type="term" value="P:aromatic amino acid family biosynthetic process"/>
    <property type="evidence" value="ECO:0007669"/>
    <property type="project" value="UniProtKB-KW"/>
</dbReference>
<dbReference type="GO" id="GO:0009423">
    <property type="term" value="P:chorismate biosynthetic process"/>
    <property type="evidence" value="ECO:0007669"/>
    <property type="project" value="UniProtKB-UniRule"/>
</dbReference>
<dbReference type="Gene3D" id="3.30.230.10">
    <property type="match status" value="1"/>
</dbReference>
<dbReference type="HAMAP" id="MF_00370">
    <property type="entry name" value="Shik_kinase_arch"/>
    <property type="match status" value="1"/>
</dbReference>
<dbReference type="InterPro" id="IPR036554">
    <property type="entry name" value="GHMP_kinase_C_sf"/>
</dbReference>
<dbReference type="InterPro" id="IPR006204">
    <property type="entry name" value="GHMP_kinase_N_dom"/>
</dbReference>
<dbReference type="InterPro" id="IPR020568">
    <property type="entry name" value="Ribosomal_Su5_D2-typ_SF"/>
</dbReference>
<dbReference type="InterPro" id="IPR014721">
    <property type="entry name" value="Ribsml_uS5_D2-typ_fold_subgr"/>
</dbReference>
<dbReference type="InterPro" id="IPR010189">
    <property type="entry name" value="SK_arc"/>
</dbReference>
<dbReference type="NCBIfam" id="TIGR01920">
    <property type="entry name" value="Shik_kin_archae"/>
    <property type="match status" value="1"/>
</dbReference>
<dbReference type="PANTHER" id="PTHR20861">
    <property type="entry name" value="HOMOSERINE/4-DIPHOSPHOCYTIDYL-2-C-METHYL-D-ERYTHRITOL KINASE"/>
    <property type="match status" value="1"/>
</dbReference>
<dbReference type="PANTHER" id="PTHR20861:SF3">
    <property type="entry name" value="SHIKIMATE KINASE"/>
    <property type="match status" value="1"/>
</dbReference>
<dbReference type="Pfam" id="PF00288">
    <property type="entry name" value="GHMP_kinases_N"/>
    <property type="match status" value="1"/>
</dbReference>
<dbReference type="PIRSF" id="PIRSF005758">
    <property type="entry name" value="Shikimt_kin_arch"/>
    <property type="match status" value="1"/>
</dbReference>
<dbReference type="SUPFAM" id="SSF55060">
    <property type="entry name" value="GHMP Kinase, C-terminal domain"/>
    <property type="match status" value="1"/>
</dbReference>
<dbReference type="SUPFAM" id="SSF54211">
    <property type="entry name" value="Ribosomal protein S5 domain 2-like"/>
    <property type="match status" value="1"/>
</dbReference>